<organism>
    <name type="scientific">Influenza A virus (strain A/Puerto Rico/8/1934 H1N1)</name>
    <dbReference type="NCBI Taxonomy" id="211044"/>
    <lineage>
        <taxon>Viruses</taxon>
        <taxon>Riboviria</taxon>
        <taxon>Orthornavirae</taxon>
        <taxon>Negarnaviricota</taxon>
        <taxon>Polyploviricotina</taxon>
        <taxon>Insthoviricetes</taxon>
        <taxon>Articulavirales</taxon>
        <taxon>Orthomyxoviridae</taxon>
        <taxon>Alphainfluenzavirus</taxon>
        <taxon>Alphainfluenzavirus influenzae</taxon>
        <taxon>Influenza A virus</taxon>
    </lineage>
</organism>
<accession>P03433</accession>
<accession>A4GXH3</accession>
<accession>Q20N31</accession>
<accession>Q8JUU6</accession>
<evidence type="ECO:0000255" key="1">
    <source>
        <dbReference type="HAMAP-Rule" id="MF_04063"/>
    </source>
</evidence>
<evidence type="ECO:0000269" key="2">
    <source>
    </source>
</evidence>
<evidence type="ECO:0000269" key="3">
    <source>
    </source>
</evidence>
<evidence type="ECO:0000269" key="4">
    <source>
    </source>
</evidence>
<evidence type="ECO:0000269" key="5">
    <source>
    </source>
</evidence>
<evidence type="ECO:0000269" key="6">
    <source>
    </source>
</evidence>
<evidence type="ECO:0000269" key="7">
    <source>
    </source>
</evidence>
<evidence type="ECO:0000269" key="8">
    <source>
    </source>
</evidence>
<evidence type="ECO:0007744" key="9">
    <source>
        <dbReference type="PDB" id="4YYL"/>
    </source>
</evidence>
<evidence type="ECO:0007744" key="10">
    <source>
        <dbReference type="PDB" id="4ZI0"/>
    </source>
</evidence>
<evidence type="ECO:0007744" key="11">
    <source>
        <dbReference type="PDB" id="4ZQQ"/>
    </source>
</evidence>
<evidence type="ECO:0007829" key="12">
    <source>
        <dbReference type="PDB" id="2ZNL"/>
    </source>
</evidence>
<evidence type="ECO:0007829" key="13">
    <source>
        <dbReference type="PDB" id="7XGC"/>
    </source>
</evidence>
<protein>
    <recommendedName>
        <fullName evidence="1">Polymerase acidic protein</fullName>
        <ecNumber evidence="1 2">3.1.-.-</ecNumber>
    </recommendedName>
    <alternativeName>
        <fullName evidence="1">RNA-directed RNA polymerase subunit P2</fullName>
    </alternativeName>
</protein>
<organismHost>
    <name type="scientific">Aves</name>
    <dbReference type="NCBI Taxonomy" id="8782"/>
</organismHost>
<organismHost>
    <name type="scientific">Homo sapiens</name>
    <name type="common">Human</name>
    <dbReference type="NCBI Taxonomy" id="9606"/>
</organismHost>
<organismHost>
    <name type="scientific">Sus scrofa</name>
    <name type="common">Pig</name>
    <dbReference type="NCBI Taxonomy" id="9823"/>
</organismHost>
<sequence>MEDFVRQCFNPMIVELAEKTMKEYGEDLKIETNKFAAICTHLEVCFMYSDFHFINEQGESIIVELGDPNALLKHRFEIIEGRDRTMAWTVVNSICNTTGAEKPKFLPDLYDYKENRFIEIGVTRREVHIYYLEKANKIKSEKTHIHIFSFTGEEMATKADYTLDEESRARIKTRLFTIRQEMASRGLWDSFRQSERGEETIEERFEITGTMRKLADQSLPPNFSSLENFRAYVDGFEPNGYIEGKLSQMSKEVNARIEPFLKTTPRPLRLPNGPPCSQRSKFLLMDALKLSIEDPSHEGEGIPLYDAIKCMRTFFGWKEPNVVKPHEKGINPNYLLSWKQVLAELQDIENEEKIPKTKNMKKTSQLKWALGENMAPEKVDFDDCKDVGDLKQYDSDEPELRSLASWIQNEFNKACELTDSSWIELDEIGEDVAPIEHIASMRRNYFTSEVSHCRATEYIMKGVYINTALLNASCAAMDDFQLIPMISKCRTKEGRRKTNLYGFIIKGRSHLRNDTDVVNFVSMEFSLTDPRLEPHKWEKYCVLEIGDMLIRSAIGQVSRPMFLYVRTNGTSKIKMKWGMEMRRCLLQSLQQIESMIEAESSVKEKDMTKEFFENKSETWPIGESPKGVEESSIGKVCRTLLAKSVFNSLYASPQLEGFSAESRKLLLIVQALRDNLEPGTFDLGGLYEAIEECLINDPWVLLNASWFNSFLTHALS</sequence>
<gene>
    <name evidence="1" type="primary">PA</name>
</gene>
<name>PA_I34A1</name>
<dbReference type="EC" id="3.1.-.-" evidence="1 2"/>
<dbReference type="EMBL" id="V01106">
    <property type="protein sequence ID" value="CAA24295.1"/>
    <property type="molecule type" value="Genomic_RNA"/>
</dbReference>
<dbReference type="EMBL" id="AF389117">
    <property type="protein sequence ID" value="AAM75157.1"/>
    <property type="molecule type" value="Genomic_RNA"/>
</dbReference>
<dbReference type="EMBL" id="EF467820">
    <property type="protein sequence ID" value="ABO21708.1"/>
    <property type="molecule type" value="Genomic_RNA"/>
</dbReference>
<dbReference type="EMBL" id="CY009449">
    <property type="protein sequence ID" value="ABD77682.1"/>
    <property type="molecule type" value="Genomic_RNA"/>
</dbReference>
<dbReference type="RefSeq" id="NP_040986.1">
    <property type="nucleotide sequence ID" value="NC_002022.1"/>
</dbReference>
<dbReference type="PDB" id="2ZNL">
    <property type="method" value="X-ray"/>
    <property type="resolution" value="2.30 A"/>
    <property type="chains" value="A=239-716"/>
</dbReference>
<dbReference type="PDB" id="4YYL">
    <property type="method" value="X-ray"/>
    <property type="resolution" value="1.91 A"/>
    <property type="chains" value="A=1-50, A=73-197"/>
</dbReference>
<dbReference type="PDB" id="4ZHZ">
    <property type="method" value="X-ray"/>
    <property type="resolution" value="2.50 A"/>
    <property type="chains" value="A=1-50, A=73-197"/>
</dbReference>
<dbReference type="PDB" id="4ZI0">
    <property type="method" value="X-ray"/>
    <property type="resolution" value="1.80 A"/>
    <property type="chains" value="A=1-50, A=73-197"/>
</dbReference>
<dbReference type="PDB" id="4ZQQ">
    <property type="method" value="X-ray"/>
    <property type="resolution" value="1.80 A"/>
    <property type="chains" value="A=1-50, A=73-197"/>
</dbReference>
<dbReference type="PDB" id="5FDD">
    <property type="method" value="X-ray"/>
    <property type="resolution" value="2.51 A"/>
    <property type="chains" value="A=1-50, A=73-197"/>
</dbReference>
<dbReference type="PDB" id="5FDG">
    <property type="method" value="X-ray"/>
    <property type="resolution" value="2.10 A"/>
    <property type="chains" value="A=1-50, A=73-197"/>
</dbReference>
<dbReference type="PDB" id="5I13">
    <property type="method" value="X-ray"/>
    <property type="resolution" value="2.15 A"/>
    <property type="chains" value="A=1-50, A=73-197"/>
</dbReference>
<dbReference type="PDB" id="5JHT">
    <property type="method" value="X-ray"/>
    <property type="resolution" value="1.75 A"/>
    <property type="chains" value="A=1-50, A=73-197"/>
</dbReference>
<dbReference type="PDB" id="5JHV">
    <property type="method" value="X-ray"/>
    <property type="resolution" value="2.75 A"/>
    <property type="chains" value="A/B=1-50, A/B=73-197"/>
</dbReference>
<dbReference type="PDB" id="7XGC">
    <property type="method" value="X-ray"/>
    <property type="resolution" value="1.60 A"/>
    <property type="chains" value="A=1-50, A=73-197"/>
</dbReference>
<dbReference type="PDBsum" id="2ZNL"/>
<dbReference type="PDBsum" id="4YYL"/>
<dbReference type="PDBsum" id="4ZHZ"/>
<dbReference type="PDBsum" id="4ZI0"/>
<dbReference type="PDBsum" id="4ZQQ"/>
<dbReference type="PDBsum" id="5FDD"/>
<dbReference type="PDBsum" id="5FDG"/>
<dbReference type="PDBsum" id="5I13"/>
<dbReference type="PDBsum" id="5JHT"/>
<dbReference type="PDBsum" id="5JHV"/>
<dbReference type="PDBsum" id="7XGC"/>
<dbReference type="SMR" id="P03433"/>
<dbReference type="DIP" id="DIP-43996N"/>
<dbReference type="IntAct" id="P03433">
    <property type="interactions" value="57"/>
</dbReference>
<dbReference type="MINT" id="P03433"/>
<dbReference type="BindingDB" id="P03433"/>
<dbReference type="ChEMBL" id="CHEMBL1169598"/>
<dbReference type="DrugBank" id="DB13997">
    <property type="generic name" value="Baloxavir marboxil"/>
</dbReference>
<dbReference type="DrugCentral" id="P03433"/>
<dbReference type="MEROPS" id="S62.001"/>
<dbReference type="GeneID" id="956535"/>
<dbReference type="KEGG" id="vg:956535"/>
<dbReference type="OrthoDB" id="495at10239"/>
<dbReference type="BRENDA" id="2.7.7.48">
    <property type="organism ID" value="7479"/>
</dbReference>
<dbReference type="Reactome" id="R-HSA-168255">
    <property type="pathway name" value="Influenza Infection"/>
</dbReference>
<dbReference type="Reactome" id="R-HSA-168271">
    <property type="pathway name" value="Transport of Ribonucleoproteins into the Host Nucleus"/>
</dbReference>
<dbReference type="Reactome" id="R-HSA-168275">
    <property type="pathway name" value="Entry of Influenza Virion into Host Cell via Endocytosis"/>
</dbReference>
<dbReference type="Reactome" id="R-HSA-168288">
    <property type="pathway name" value="Fusion of the Influenza Virion to the Host Cell Endosome"/>
</dbReference>
<dbReference type="Reactome" id="R-HSA-168298">
    <property type="pathway name" value="Release"/>
</dbReference>
<dbReference type="Reactome" id="R-HSA-168302">
    <property type="pathway name" value="Budding"/>
</dbReference>
<dbReference type="Reactome" id="R-HSA-168303">
    <property type="pathway name" value="Packaging of Eight RNA Segments"/>
</dbReference>
<dbReference type="Reactome" id="R-HSA-168325">
    <property type="pathway name" value="Viral Messenger RNA Synthesis"/>
</dbReference>
<dbReference type="Reactome" id="R-HSA-168330">
    <property type="pathway name" value="Viral RNP Complexes in the Host Cell Nucleus"/>
</dbReference>
<dbReference type="Reactome" id="R-HSA-168333">
    <property type="pathway name" value="NEP/NS2 Interacts with the Cellular Export Machinery"/>
</dbReference>
<dbReference type="Reactome" id="R-HSA-168336">
    <property type="pathway name" value="Uncoating of the Influenza Virion"/>
</dbReference>
<dbReference type="Reactome" id="R-HSA-192814">
    <property type="pathway name" value="vRNA Synthesis"/>
</dbReference>
<dbReference type="Reactome" id="R-HSA-192823">
    <property type="pathway name" value="Viral mRNA Translation"/>
</dbReference>
<dbReference type="Reactome" id="R-HSA-192869">
    <property type="pathway name" value="cRNA Synthesis"/>
</dbReference>
<dbReference type="Reactome" id="R-HSA-192905">
    <property type="pathway name" value="vRNP Assembly"/>
</dbReference>
<dbReference type="EvolutionaryTrace" id="P03433"/>
<dbReference type="Proteomes" id="UP000009255">
    <property type="component" value="Genome"/>
</dbReference>
<dbReference type="Proteomes" id="UP000116373">
    <property type="component" value="Genome"/>
</dbReference>
<dbReference type="Proteomes" id="UP000170967">
    <property type="component" value="Genome"/>
</dbReference>
<dbReference type="GO" id="GO:0005576">
    <property type="term" value="C:extracellular region"/>
    <property type="evidence" value="ECO:0000304"/>
    <property type="project" value="Reactome"/>
</dbReference>
<dbReference type="GO" id="GO:0030430">
    <property type="term" value="C:host cell cytoplasm"/>
    <property type="evidence" value="ECO:0007669"/>
    <property type="project" value="UniProtKB-SubCell"/>
</dbReference>
<dbReference type="GO" id="GO:0042025">
    <property type="term" value="C:host cell nucleus"/>
    <property type="evidence" value="ECO:0007669"/>
    <property type="project" value="UniProtKB-SubCell"/>
</dbReference>
<dbReference type="GO" id="GO:0004519">
    <property type="term" value="F:endonuclease activity"/>
    <property type="evidence" value="ECO:0007669"/>
    <property type="project" value="UniProtKB-KW"/>
</dbReference>
<dbReference type="GO" id="GO:0046872">
    <property type="term" value="F:metal ion binding"/>
    <property type="evidence" value="ECO:0007669"/>
    <property type="project" value="UniProtKB-KW"/>
</dbReference>
<dbReference type="GO" id="GO:0003723">
    <property type="term" value="F:RNA binding"/>
    <property type="evidence" value="ECO:0007669"/>
    <property type="project" value="UniProtKB-UniRule"/>
</dbReference>
<dbReference type="GO" id="GO:0075526">
    <property type="term" value="P:cap snatching"/>
    <property type="evidence" value="ECO:0007669"/>
    <property type="project" value="UniProtKB-UniRule"/>
</dbReference>
<dbReference type="GO" id="GO:0006351">
    <property type="term" value="P:DNA-templated transcription"/>
    <property type="evidence" value="ECO:0007669"/>
    <property type="project" value="UniProtKB-UniRule"/>
</dbReference>
<dbReference type="GO" id="GO:0039657">
    <property type="term" value="P:symbiont-mediated suppression of host gene expression"/>
    <property type="evidence" value="ECO:0007669"/>
    <property type="project" value="UniProtKB-KW"/>
</dbReference>
<dbReference type="GO" id="GO:0039523">
    <property type="term" value="P:symbiont-mediated suppression of host mRNA transcription via inhibition of RNA polymerase II activity"/>
    <property type="evidence" value="ECO:0007669"/>
    <property type="project" value="UniProtKB-UniRule"/>
</dbReference>
<dbReference type="GO" id="GO:0039694">
    <property type="term" value="P:viral RNA genome replication"/>
    <property type="evidence" value="ECO:0007669"/>
    <property type="project" value="InterPro"/>
</dbReference>
<dbReference type="GO" id="GO:0075523">
    <property type="term" value="P:viral translational frameshifting"/>
    <property type="evidence" value="ECO:0007669"/>
    <property type="project" value="UniProtKB-KW"/>
</dbReference>
<dbReference type="FunFam" id="3.40.91.90:FF:000001">
    <property type="entry name" value="Polymerase acidic protein"/>
    <property type="match status" value="1"/>
</dbReference>
<dbReference type="Gene3D" id="3.40.91.90">
    <property type="entry name" value="Influenza RNA-dependent RNA polymerase subunit PA, endonuclease domain"/>
    <property type="match status" value="1"/>
</dbReference>
<dbReference type="HAMAP" id="MF_04063">
    <property type="entry name" value="INFV_PA"/>
    <property type="match status" value="1"/>
</dbReference>
<dbReference type="InterPro" id="IPR037534">
    <property type="entry name" value="INFV_PA"/>
</dbReference>
<dbReference type="InterPro" id="IPR001009">
    <property type="entry name" value="PA/PA-X"/>
</dbReference>
<dbReference type="InterPro" id="IPR038372">
    <property type="entry name" value="PA/PA-X_sf"/>
</dbReference>
<dbReference type="Pfam" id="PF00603">
    <property type="entry name" value="Flu_PA"/>
    <property type="match status" value="1"/>
</dbReference>
<proteinExistence type="evidence at protein level"/>
<keyword id="KW-0002">3D-structure</keyword>
<keyword id="KW-1157">Cap snatching</keyword>
<keyword id="KW-0255">Endonuclease</keyword>
<keyword id="KW-1262">Eukaryotic host gene expression shutoff by virus</keyword>
<keyword id="KW-1191">Eukaryotic host transcription shutoff by virus</keyword>
<keyword id="KW-1035">Host cytoplasm</keyword>
<keyword id="KW-1190">Host gene expression shutoff by virus</keyword>
<keyword id="KW-1048">Host nucleus</keyword>
<keyword id="KW-0945">Host-virus interaction</keyword>
<keyword id="KW-0378">Hydrolase</keyword>
<keyword id="KW-1104">Inhibition of host RNA polymerase II by virus</keyword>
<keyword id="KW-0464">Manganese</keyword>
<keyword id="KW-0479">Metal-binding</keyword>
<keyword id="KW-0540">Nuclease</keyword>
<keyword id="KW-0597">Phosphoprotein</keyword>
<keyword id="KW-1185">Reference proteome</keyword>
<keyword id="KW-0688">Ribosomal frameshifting</keyword>
<comment type="function">
    <text evidence="1 2 3">Plays an essential role in viral RNA transcription and replication by forming the heterotrimeric polymerase complex together with PB1 and PB2 subunits. The complex transcribes viral mRNAs by using a unique mechanism called cap-snatching. It consists in the hijacking and cleavage of host capped pre-mRNAs. These short capped RNAs are then used as primers for viral mRNAs. The PB2 subunit is responsible for the binding of the 5' cap of cellular pre-mRNAs which are subsequently cleaved after 10-13 nucleotides by the PA subunit that carries the endonuclease activity.</text>
</comment>
<comment type="cofactor">
    <cofactor evidence="1 2 4 5">
        <name>Mn(2+)</name>
        <dbReference type="ChEBI" id="CHEBI:29035"/>
    </cofactor>
    <text evidence="1 4 5">Binds 2 manganese ions per subunit.</text>
</comment>
<comment type="subunit">
    <text evidence="1 3 6">Influenza RNA polymerase is composed of three subunits: PB1, PB2 and PA. Interacts (via C-terminus) with PB1 (via N-terminus).</text>
</comment>
<comment type="interaction">
    <interactant intactId="EBI-2547616">
        <id>P03433</id>
    </interactant>
    <interactant intactId="EBI-2547543">
        <id>P03485</id>
        <label>M</label>
    </interactant>
    <organismsDiffer>false</organismsDiffer>
    <experiments>2</experiments>
</comment>
<comment type="interaction">
    <interactant intactId="EBI-2547616">
        <id>P03433</id>
    </interactant>
    <interactant intactId="EBI-2547640">
        <id>P03466</id>
        <label>NP</label>
    </interactant>
    <organismsDiffer>false</organismsDiffer>
    <experiments>3</experiments>
</comment>
<comment type="interaction">
    <interactant intactId="EBI-2547616">
        <id>P03433</id>
    </interactant>
    <interactant intactId="EBI-2547514">
        <id>P03431</id>
        <label>PB1</label>
    </interactant>
    <organismsDiffer>false</organismsDiffer>
    <experiments>6</experiments>
</comment>
<comment type="subcellular location">
    <subcellularLocation>
        <location evidence="1">Host cytoplasm</location>
    </subcellularLocation>
    <subcellularLocation>
        <location evidence="1">Host nucleus</location>
    </subcellularLocation>
    <text evidence="1 3 7">PB1 and PA are transported in the host nucleus as a complex.</text>
</comment>
<comment type="alternative products">
    <event type="ribosomal frameshifting"/>
    <isoform>
        <id>P03433-1</id>
        <name>PA</name>
        <sequence type="displayed"/>
    </isoform>
    <isoform>
        <id>P0CK64-1</id>
        <name>PA-X</name>
        <sequence type="external"/>
    </isoform>
</comment>
<comment type="PTM">
    <text evidence="1 8">Phosphorylated on serines and threonines by host kinases, including human casein kinase II.</text>
</comment>
<comment type="similarity">
    <text evidence="1">Belongs to the influenza viruses PA family.</text>
</comment>
<reference key="1">
    <citation type="journal article" date="1982" name="Cell">
        <title>Nucleotide sequences of influenza virus segments 1 and 3 reveal mosaic structure of a small viral RNA segment.</title>
        <authorList>
            <person name="Fields S."/>
            <person name="Winter G."/>
        </authorList>
    </citation>
    <scope>NUCLEOTIDE SEQUENCE [GENOMIC RNA]</scope>
</reference>
<reference key="2">
    <citation type="journal article" date="2001" name="Philos. Trans. R. Soc. Lond., B, Biol. Sci.">
        <title>Plasmid-only rescue of influenza A virus vaccine candidates.</title>
        <authorList>
            <person name="Schickli J.H."/>
            <person name="Flandorfer A."/>
            <person name="Nakaya T."/>
            <person name="Martinez-Sobrido L."/>
            <person name="Garcia-Sastre A."/>
            <person name="Palese P."/>
        </authorList>
    </citation>
    <scope>NUCLEOTIDE SEQUENCE [GENOMIC RNA]</scope>
</reference>
<reference key="3">
    <citation type="journal article" date="2004" name="Virus Res.">
        <title>Efficient generation and growth of influenza virus A/PR/8/34 from eight cDNA fragments.</title>
        <authorList>
            <person name="de Wit E."/>
            <person name="Spronken M.I.J."/>
            <person name="Bestebroer T.M."/>
            <person name="Rimmelzwaan G.F."/>
            <person name="Osterhaus A.D.M.E."/>
            <person name="Fouchier R.A.M."/>
        </authorList>
    </citation>
    <scope>NUCLEOTIDE SEQUENCE [GENOMIC RNA]</scope>
    <scope>REVERSE GENETICS</scope>
</reference>
<reference key="4">
    <citation type="submission" date="2006-03" db="EMBL/GenBank/DDBJ databases">
        <title>The NIAID influenza genome sequencing project.</title>
        <authorList>
            <person name="Ghedin E."/>
            <person name="Spiro D."/>
            <person name="Miller N."/>
            <person name="Zaborsky J."/>
            <person name="Feldblyum T."/>
            <person name="Subbu V."/>
            <person name="Shumway M."/>
            <person name="Sparenborg J."/>
            <person name="Groveman L."/>
            <person name="Halpin R."/>
            <person name="Sitz J."/>
            <person name="Koo H."/>
            <person name="Salzberg S.L."/>
            <person name="Webster R.G."/>
            <person name="Hoffmann E."/>
            <person name="Krauss S."/>
            <person name="Naeve C."/>
            <person name="Bao Y."/>
            <person name="Bolotov P."/>
            <person name="Dernovoy D."/>
            <person name="Kiryutin B."/>
            <person name="Lipman D.J."/>
            <person name="Tatusova T."/>
        </authorList>
    </citation>
    <scope>NUCLEOTIDE SEQUENCE [GENOMIC RNA]</scope>
</reference>
<reference key="5">
    <citation type="journal article" date="1994" name="J. Gen. Virol.">
        <title>Complex structure of the nuclear translocation signal of influenza virus polymerase PA subunit.</title>
        <authorList>
            <person name="Nieto A."/>
            <person name="de la Luna S."/>
            <person name="Barcena J."/>
            <person name="Portela A."/>
            <person name="Ortin J."/>
        </authorList>
    </citation>
    <scope>SUBCELLULAR LOCATION</scope>
    <source>
        <strain>A/Victoria/3/75</strain>
    </source>
</reference>
<reference key="6">
    <citation type="journal article" date="1998" name="J. Gen. Virol.">
        <title>The PA influenza virus polymerase subunit is a phosphorylated protein.</title>
        <authorList>
            <person name="Sanz-Ezquerro J.J."/>
            <person name="Fernandez-Santaren J."/>
            <person name="Sierra T."/>
            <person name="Aragon T."/>
            <person name="Ortega J."/>
            <person name="Ortin J."/>
            <person name="Smith G.L."/>
            <person name="Nieto A."/>
        </authorList>
    </citation>
    <scope>PHOSPHORYLATION</scope>
    <source>
        <strain>A/Victoria/3/75</strain>
    </source>
</reference>
<reference key="7">
    <citation type="journal article" date="2009" name="Nature">
        <title>The cap-snatching endonuclease of influenza virus polymerase resides in the PA subunit.</title>
        <authorList>
            <person name="Dias A."/>
            <person name="Bouvier D."/>
            <person name="Crepin T."/>
            <person name="McCarthy A.A."/>
            <person name="Hart D.J."/>
            <person name="Baudin F."/>
            <person name="Cusack S."/>
            <person name="Ruigrok R.W."/>
        </authorList>
    </citation>
    <scope>FUNCTION</scope>
    <scope>COFACTOR</scope>
    <scope>CATALYTIC ACTIVITY</scope>
    <source>
        <strain>A/Victoria/3/1975</strain>
    </source>
</reference>
<reference key="8">
    <citation type="journal article" date="2011" name="Biochem. Biophys. Res. Commun.">
        <title>A novel function of the N-terminal domain of PA in assembly of influenza A virus RNA polymerase.</title>
        <authorList>
            <person name="Suzuki T."/>
            <person name="Ainai A."/>
            <person name="Nagata N."/>
            <person name="Sata T."/>
            <person name="Sawa H."/>
            <person name="Hasegawa H."/>
        </authorList>
    </citation>
    <scope>INTERACTION WITH PB1</scope>
    <scope>FUNCTION</scope>
    <scope>SUBCELLULAR LOCATION</scope>
</reference>
<reference key="9">
    <citation type="journal article" date="2017" name="Nat. Commun.">
        <title>Comparative influenza protein interactomes identify the role of plakophilin 2 in virus restriction.</title>
        <authorList>
            <person name="Wang L."/>
            <person name="Fu B."/>
            <person name="Li W."/>
            <person name="Patil G."/>
            <person name="Liu L."/>
            <person name="Dorf M.E."/>
            <person name="Li S."/>
        </authorList>
    </citation>
    <scope>INTERACTION WITH PB1</scope>
</reference>
<reference key="10">
    <citation type="journal article" date="2008" name="Nature">
        <title>The structural basis for an essential subunit interaction in influenza virus RNA polymerase.</title>
        <authorList>
            <person name="Obayashi E."/>
            <person name="Yoshida H."/>
            <person name="Kawai F."/>
            <person name="Shibayama N."/>
            <person name="Kawaguchi A."/>
            <person name="Nagata K."/>
            <person name="Tame J.R."/>
            <person name="Park S.Y."/>
        </authorList>
    </citation>
    <scope>X-RAY CRYSTALLOGRAPHY (2.30 ANGSTROMS) OF 239-716</scope>
</reference>
<reference key="11">
    <citation type="journal article" date="2015" name="Bioorg. Med. Chem.">
        <title>Structural and computational study on inhibitory compounds for endonuclease activity of influenza virus polymerase.</title>
        <authorList>
            <person name="Fudo S."/>
            <person name="Yamamoto N."/>
            <person name="Nukaga M."/>
            <person name="Odagiri T."/>
            <person name="Tashiro M."/>
            <person name="Neya S."/>
            <person name="Hoshino T."/>
        </authorList>
    </citation>
    <scope>X-RAY CRYSTALLOGRAPHY (1.91 ANGSTROMS) OF 1-50 AND 73-197 IN COMPLEX WITH MANGANESE</scope>
    <scope>COFACTOR</scope>
</reference>
<reference key="12">
    <citation type="journal article" date="2016" name="Biochemistry">
        <title>Two distinctive binding modes of endonuclease inhibitors to the N-terminal region of Influenza virus polymerase acidic subunit.</title>
        <authorList>
            <person name="Fudo S."/>
            <person name="Yamamoto N."/>
            <person name="Nukaga M."/>
            <person name="Odagiri T."/>
            <person name="Tashiro M."/>
            <person name="Hoshino T."/>
        </authorList>
    </citation>
    <scope>X-RAY CRYSTALLOGRAPHY (1.80 ANGSTROMS) OF 1-50 AND 73-197 IN COMPLEX WITH MANGANESE</scope>
    <scope>COFACTOR</scope>
</reference>
<feature type="chain" id="PRO_0000078796" description="Polymerase acidic protein">
    <location>
        <begin position="1"/>
        <end position="716"/>
    </location>
</feature>
<feature type="short sequence motif" description="Nuclear localization signal 1 (NLS1)" evidence="1 7">
    <location>
        <begin position="124"/>
        <end position="139"/>
    </location>
</feature>
<feature type="short sequence motif" description="Nuclear localization signal 2 (NLS2)" evidence="1 7">
    <location>
        <begin position="184"/>
        <end position="247"/>
    </location>
</feature>
<feature type="binding site" evidence="1 4 5 9 10 11">
    <location>
        <position position="41"/>
    </location>
    <ligand>
        <name>Mn(2+)</name>
        <dbReference type="ChEBI" id="CHEBI:29035"/>
        <label>1</label>
        <note>catalytic</note>
    </ligand>
</feature>
<feature type="binding site" evidence="1 5 9 10 11">
    <location>
        <position position="80"/>
    </location>
    <ligand>
        <name>Mn(2+)</name>
        <dbReference type="ChEBI" id="CHEBI:29035"/>
        <label>2</label>
        <note>catalytic</note>
    </ligand>
</feature>
<feature type="binding site" evidence="1 5 9 10 11">
    <location>
        <position position="108"/>
    </location>
    <ligand>
        <name>Mn(2+)</name>
        <dbReference type="ChEBI" id="CHEBI:29035"/>
        <label>1</label>
        <note>catalytic</note>
    </ligand>
</feature>
<feature type="binding site" evidence="1 5 9 10 11">
    <location>
        <position position="108"/>
    </location>
    <ligand>
        <name>Mn(2+)</name>
        <dbReference type="ChEBI" id="CHEBI:29035"/>
        <label>2</label>
        <note>catalytic</note>
    </ligand>
</feature>
<feature type="binding site" evidence="1 5 9 10 11">
    <location>
        <position position="119"/>
    </location>
    <ligand>
        <name>Mn(2+)</name>
        <dbReference type="ChEBI" id="CHEBI:29035"/>
        <label>1</label>
        <note>catalytic</note>
    </ligand>
</feature>
<feature type="binding site" evidence="1 4 5 9 10 11">
    <location>
        <position position="120"/>
    </location>
    <ligand>
        <name>Mn(2+)</name>
        <dbReference type="ChEBI" id="CHEBI:29035"/>
        <label>1</label>
        <note>catalytic</note>
    </ligand>
</feature>
<feature type="sequence conflict" description="In Ref. 1; CAA24295." ref="1">
    <original>I</original>
    <variation>L</variation>
    <location>
        <position position="550"/>
    </location>
</feature>
<feature type="helix" evidence="13">
    <location>
        <begin position="1"/>
        <end position="8"/>
    </location>
</feature>
<feature type="helix" evidence="13">
    <location>
        <begin position="11"/>
        <end position="23"/>
    </location>
</feature>
<feature type="turn" evidence="13">
    <location>
        <begin position="28"/>
        <end position="30"/>
    </location>
</feature>
<feature type="helix" evidence="13">
    <location>
        <begin position="32"/>
        <end position="50"/>
    </location>
</feature>
<feature type="turn" evidence="13">
    <location>
        <begin position="73"/>
        <end position="75"/>
    </location>
</feature>
<feature type="strand" evidence="13">
    <location>
        <begin position="76"/>
        <end position="78"/>
    </location>
</feature>
<feature type="helix" evidence="13">
    <location>
        <begin position="84"/>
        <end position="98"/>
    </location>
</feature>
<feature type="strand" evidence="13">
    <location>
        <begin position="108"/>
        <end position="111"/>
    </location>
</feature>
<feature type="turn" evidence="13">
    <location>
        <begin position="112"/>
        <end position="115"/>
    </location>
</feature>
<feature type="strand" evidence="13">
    <location>
        <begin position="116"/>
        <end position="125"/>
    </location>
</feature>
<feature type="helix" evidence="13">
    <location>
        <begin position="127"/>
        <end position="138"/>
    </location>
</feature>
<feature type="strand" evidence="13">
    <location>
        <begin position="144"/>
        <end position="152"/>
    </location>
</feature>
<feature type="strand" evidence="13">
    <location>
        <begin position="154"/>
        <end position="156"/>
    </location>
</feature>
<feature type="helix" evidence="13">
    <location>
        <begin position="157"/>
        <end position="159"/>
    </location>
</feature>
<feature type="helix" evidence="13">
    <location>
        <begin position="165"/>
        <end position="184"/>
    </location>
</feature>
<feature type="helix" evidence="13">
    <location>
        <begin position="188"/>
        <end position="193"/>
    </location>
</feature>
<feature type="strand" evidence="12">
    <location>
        <begin position="273"/>
        <end position="275"/>
    </location>
</feature>
<feature type="strand" evidence="12">
    <location>
        <begin position="290"/>
        <end position="294"/>
    </location>
</feature>
<feature type="turn" evidence="12">
    <location>
        <begin position="298"/>
        <end position="301"/>
    </location>
</feature>
<feature type="helix" evidence="12">
    <location>
        <begin position="303"/>
        <end position="311"/>
    </location>
</feature>
<feature type="strand" evidence="12">
    <location>
        <begin position="317"/>
        <end position="324"/>
    </location>
</feature>
<feature type="strand" evidence="12">
    <location>
        <begin position="327"/>
        <end position="329"/>
    </location>
</feature>
<feature type="helix" evidence="12">
    <location>
        <begin position="331"/>
        <end position="345"/>
    </location>
</feature>
<feature type="helix" evidence="12">
    <location>
        <begin position="364"/>
        <end position="369"/>
    </location>
</feature>
<feature type="helix" evidence="12">
    <location>
        <begin position="406"/>
        <end position="414"/>
    </location>
</feature>
<feature type="strand" evidence="12">
    <location>
        <begin position="419"/>
        <end position="421"/>
    </location>
</feature>
<feature type="helix" evidence="12">
    <location>
        <begin position="437"/>
        <end position="450"/>
    </location>
</feature>
<feature type="strand" evidence="12">
    <location>
        <begin position="451"/>
        <end position="453"/>
    </location>
</feature>
<feature type="helix" evidence="12">
    <location>
        <begin position="454"/>
        <end position="474"/>
    </location>
</feature>
<feature type="strand" evidence="12">
    <location>
        <begin position="477"/>
        <end position="479"/>
    </location>
</feature>
<feature type="strand" evidence="12">
    <location>
        <begin position="481"/>
        <end position="490"/>
    </location>
</feature>
<feature type="strand" evidence="12">
    <location>
        <begin position="496"/>
        <end position="506"/>
    </location>
</feature>
<feature type="strand" evidence="12">
    <location>
        <begin position="517"/>
        <end position="526"/>
    </location>
</feature>
<feature type="helix" evidence="12">
    <location>
        <begin position="530"/>
        <end position="532"/>
    </location>
</feature>
<feature type="turn" evidence="12">
    <location>
        <begin position="534"/>
        <end position="539"/>
    </location>
</feature>
<feature type="strand" evidence="12">
    <location>
        <begin position="541"/>
        <end position="548"/>
    </location>
</feature>
<feature type="strand" evidence="12">
    <location>
        <begin position="559"/>
        <end position="571"/>
    </location>
</feature>
<feature type="helix" evidence="12">
    <location>
        <begin position="572"/>
        <end position="579"/>
    </location>
</feature>
<feature type="helix" evidence="12">
    <location>
        <begin position="580"/>
        <end position="582"/>
    </location>
</feature>
<feature type="helix" evidence="12">
    <location>
        <begin position="583"/>
        <end position="602"/>
    </location>
</feature>
<feature type="helix" evidence="12">
    <location>
        <begin position="608"/>
        <end position="613"/>
    </location>
</feature>
<feature type="strand" evidence="12">
    <location>
        <begin position="619"/>
        <end position="624"/>
    </location>
</feature>
<feature type="strand" evidence="12">
    <location>
        <begin position="627"/>
        <end position="631"/>
    </location>
</feature>
<feature type="helix" evidence="12">
    <location>
        <begin position="633"/>
        <end position="649"/>
    </location>
</feature>
<feature type="helix" evidence="12">
    <location>
        <begin position="653"/>
        <end position="674"/>
    </location>
</feature>
<feature type="helix" evidence="12">
    <location>
        <begin position="686"/>
        <end position="691"/>
    </location>
</feature>
<feature type="helix" evidence="12">
    <location>
        <begin position="698"/>
        <end position="714"/>
    </location>
</feature>